<dbReference type="EMBL" id="AF141380">
    <property type="protein sequence ID" value="AAD31509.1"/>
    <property type="molecule type" value="Genomic_DNA"/>
</dbReference>
<dbReference type="EMBL" id="AL513382">
    <property type="protein sequence ID" value="CAD03102.1"/>
    <property type="molecule type" value="Genomic_DNA"/>
</dbReference>
<dbReference type="EMBL" id="AE014613">
    <property type="protein sequence ID" value="AAO71124.1"/>
    <property type="molecule type" value="Genomic_DNA"/>
</dbReference>
<dbReference type="RefSeq" id="NP_458051.1">
    <property type="nucleotide sequence ID" value="NC_003198.1"/>
</dbReference>
<dbReference type="RefSeq" id="WP_000725369.1">
    <property type="nucleotide sequence ID" value="NZ_WSUR01000010.1"/>
</dbReference>
<dbReference type="SMR" id="Q9X6N0"/>
<dbReference type="STRING" id="220341.gene:17587740"/>
<dbReference type="KEGG" id="stt:t3623"/>
<dbReference type="KEGG" id="sty:STY3883"/>
<dbReference type="PATRIC" id="fig|220341.7.peg.3964"/>
<dbReference type="eggNOG" id="COG1651">
    <property type="taxonomic scope" value="Bacteria"/>
</dbReference>
<dbReference type="HOGENOM" id="CLU_088255_3_0_6"/>
<dbReference type="OMA" id="NAIHKQK"/>
<dbReference type="OrthoDB" id="9784896at2"/>
<dbReference type="Proteomes" id="UP000000541">
    <property type="component" value="Chromosome"/>
</dbReference>
<dbReference type="Proteomes" id="UP000002670">
    <property type="component" value="Chromosome"/>
</dbReference>
<dbReference type="GO" id="GO:0042597">
    <property type="term" value="C:periplasmic space"/>
    <property type="evidence" value="ECO:0007669"/>
    <property type="project" value="UniProtKB-SubCell"/>
</dbReference>
<dbReference type="GO" id="GO:0015036">
    <property type="term" value="F:disulfide oxidoreductase activity"/>
    <property type="evidence" value="ECO:0007669"/>
    <property type="project" value="UniProtKB-ARBA"/>
</dbReference>
<dbReference type="CDD" id="cd03019">
    <property type="entry name" value="DsbA_DsbA"/>
    <property type="match status" value="1"/>
</dbReference>
<dbReference type="Gene3D" id="3.40.30.10">
    <property type="entry name" value="Glutaredoxin"/>
    <property type="match status" value="1"/>
</dbReference>
<dbReference type="InterPro" id="IPR001853">
    <property type="entry name" value="DSBA-like_thioredoxin_dom"/>
</dbReference>
<dbReference type="InterPro" id="IPR023205">
    <property type="entry name" value="DsbA/DsbL"/>
</dbReference>
<dbReference type="InterPro" id="IPR050824">
    <property type="entry name" value="Thiol_disulfide_DsbA"/>
</dbReference>
<dbReference type="InterPro" id="IPR036249">
    <property type="entry name" value="Thioredoxin-like_sf"/>
</dbReference>
<dbReference type="InterPro" id="IPR017937">
    <property type="entry name" value="Thioredoxin_CS"/>
</dbReference>
<dbReference type="InterPro" id="IPR013766">
    <property type="entry name" value="Thioredoxin_domain"/>
</dbReference>
<dbReference type="NCBIfam" id="NF008198">
    <property type="entry name" value="PRK10954.1"/>
    <property type="match status" value="1"/>
</dbReference>
<dbReference type="PANTHER" id="PTHR35891">
    <property type="entry name" value="THIOL:DISULFIDE INTERCHANGE PROTEIN DSBA"/>
    <property type="match status" value="1"/>
</dbReference>
<dbReference type="PANTHER" id="PTHR35891:SF2">
    <property type="entry name" value="THIOL:DISULFIDE INTERCHANGE PROTEIN DSBA"/>
    <property type="match status" value="1"/>
</dbReference>
<dbReference type="Pfam" id="PF01323">
    <property type="entry name" value="DSBA"/>
    <property type="match status" value="1"/>
</dbReference>
<dbReference type="PIRSF" id="PIRSF001488">
    <property type="entry name" value="Tdi_protein"/>
    <property type="match status" value="1"/>
</dbReference>
<dbReference type="SUPFAM" id="SSF52833">
    <property type="entry name" value="Thioredoxin-like"/>
    <property type="match status" value="1"/>
</dbReference>
<dbReference type="PROSITE" id="PS00194">
    <property type="entry name" value="THIOREDOXIN_1"/>
    <property type="match status" value="1"/>
</dbReference>
<dbReference type="PROSITE" id="PS51352">
    <property type="entry name" value="THIOREDOXIN_2"/>
    <property type="match status" value="1"/>
</dbReference>
<organism>
    <name type="scientific">Salmonella typhi</name>
    <dbReference type="NCBI Taxonomy" id="90370"/>
    <lineage>
        <taxon>Bacteria</taxon>
        <taxon>Pseudomonadati</taxon>
        <taxon>Pseudomonadota</taxon>
        <taxon>Gammaproteobacteria</taxon>
        <taxon>Enterobacterales</taxon>
        <taxon>Enterobacteriaceae</taxon>
        <taxon>Salmonella</taxon>
    </lineage>
</organism>
<accession>Q9X6N0</accession>
<evidence type="ECO:0000250" key="1"/>
<evidence type="ECO:0000255" key="2">
    <source>
        <dbReference type="PROSITE-ProRule" id="PRU00691"/>
    </source>
</evidence>
<evidence type="ECO:0000305" key="3"/>
<feature type="signal peptide" evidence="1">
    <location>
        <begin position="1"/>
        <end position="19"/>
    </location>
</feature>
<feature type="chain" id="PRO_0000034265" description="Thiol:disulfide interchange protein DsbA">
    <location>
        <begin position="20"/>
        <end position="207"/>
    </location>
</feature>
<feature type="domain" description="Thioredoxin" evidence="2">
    <location>
        <begin position="20"/>
        <end position="158"/>
    </location>
</feature>
<feature type="disulfide bond" description="Redox-active" evidence="2">
    <location>
        <begin position="49"/>
        <end position="52"/>
    </location>
</feature>
<proteinExistence type="inferred from homology"/>
<keyword id="KW-1015">Disulfide bond</keyword>
<keyword id="KW-0574">Periplasm</keyword>
<keyword id="KW-0676">Redox-active center</keyword>
<keyword id="KW-0732">Signal</keyword>
<protein>
    <recommendedName>
        <fullName>Thiol:disulfide interchange protein DsbA</fullName>
    </recommendedName>
</protein>
<reference key="1">
    <citation type="submission" date="1999-04" db="EMBL/GenBank/DDBJ databases">
        <title>DsbA-like oxidoreductase from Salmonella typhi.</title>
        <authorList>
            <person name="Mendoza del Cueto M.T."/>
            <person name="Rotger R."/>
        </authorList>
    </citation>
    <scope>NUCLEOTIDE SEQUENCE [GENOMIC DNA]</scope>
    <source>
        <strain>5866</strain>
    </source>
</reference>
<reference key="2">
    <citation type="journal article" date="2001" name="Nature">
        <title>Complete genome sequence of a multiple drug resistant Salmonella enterica serovar Typhi CT18.</title>
        <authorList>
            <person name="Parkhill J."/>
            <person name="Dougan G."/>
            <person name="James K.D."/>
            <person name="Thomson N.R."/>
            <person name="Pickard D."/>
            <person name="Wain J."/>
            <person name="Churcher C.M."/>
            <person name="Mungall K.L."/>
            <person name="Bentley S.D."/>
            <person name="Holden M.T.G."/>
            <person name="Sebaihia M."/>
            <person name="Baker S."/>
            <person name="Basham D."/>
            <person name="Brooks K."/>
            <person name="Chillingworth T."/>
            <person name="Connerton P."/>
            <person name="Cronin A."/>
            <person name="Davis P."/>
            <person name="Davies R.M."/>
            <person name="Dowd L."/>
            <person name="White N."/>
            <person name="Farrar J."/>
            <person name="Feltwell T."/>
            <person name="Hamlin N."/>
            <person name="Haque A."/>
            <person name="Hien T.T."/>
            <person name="Holroyd S."/>
            <person name="Jagels K."/>
            <person name="Krogh A."/>
            <person name="Larsen T.S."/>
            <person name="Leather S."/>
            <person name="Moule S."/>
            <person name="O'Gaora P."/>
            <person name="Parry C."/>
            <person name="Quail M.A."/>
            <person name="Rutherford K.M."/>
            <person name="Simmonds M."/>
            <person name="Skelton J."/>
            <person name="Stevens K."/>
            <person name="Whitehead S."/>
            <person name="Barrell B.G."/>
        </authorList>
    </citation>
    <scope>NUCLEOTIDE SEQUENCE [LARGE SCALE GENOMIC DNA]</scope>
    <source>
        <strain>CT18</strain>
    </source>
</reference>
<reference key="3">
    <citation type="journal article" date="2003" name="J. Bacteriol.">
        <title>Comparative genomics of Salmonella enterica serovar Typhi strains Ty2 and CT18.</title>
        <authorList>
            <person name="Deng W."/>
            <person name="Liou S.-R."/>
            <person name="Plunkett G. III"/>
            <person name="Mayhew G.F."/>
            <person name="Rose D.J."/>
            <person name="Burland V."/>
            <person name="Kodoyianni V."/>
            <person name="Schwartz D.C."/>
            <person name="Blattner F.R."/>
        </authorList>
    </citation>
    <scope>NUCLEOTIDE SEQUENCE [LARGE SCALE GENOMIC DNA]</scope>
    <source>
        <strain>ATCC 700931 / Ty2</strain>
    </source>
</reference>
<name>DSBA_SALTI</name>
<sequence length="207" mass="22910">MKKIWLALAGMVLAFSASAAQISDGKQYITLDKPVAGEPQVLEFFSFYCPHCYQFEEVLHVSDNVKKKLPKGTKMTKYHVEFLGPLGKELTQAWAVAMALGVEDKVTVPLFEAVQKTQTVQSAADIRKVFVDAGVKGEDYDAAWNSFVVKSLVAQQEKAAADLQLQGVPAMFVNGKYQINPQGMDTSSMDVFVQQYADTVKYLVDKK</sequence>
<comment type="function">
    <text evidence="1">Required for disulfide bond formation in some periplasmic proteins such as PhoA or OmpA. Acts by transferring its disulfide bond to other proteins and is reduced in the process. DsbA is reoxidized by DsbB. It is required for pilus biogenesis (By similarity).</text>
</comment>
<comment type="subcellular location">
    <subcellularLocation>
        <location>Periplasm</location>
    </subcellularLocation>
</comment>
<comment type="similarity">
    <text evidence="3">Belongs to the thioredoxin family. DsbA subfamily.</text>
</comment>
<gene>
    <name type="primary">dsbA</name>
    <name type="ordered locus">STY3883</name>
    <name type="ordered locus">t3623</name>
</gene>